<protein>
    <recommendedName>
        <fullName>Small heat shock protein IbpB</fullName>
    </recommendedName>
    <alternativeName>
        <fullName>16 kDa heat shock protein B</fullName>
    </alternativeName>
</protein>
<organism>
    <name type="scientific">Escherichia coli (strain K12)</name>
    <dbReference type="NCBI Taxonomy" id="83333"/>
    <lineage>
        <taxon>Bacteria</taxon>
        <taxon>Pseudomonadati</taxon>
        <taxon>Pseudomonadota</taxon>
        <taxon>Gammaproteobacteria</taxon>
        <taxon>Enterobacterales</taxon>
        <taxon>Enterobacteriaceae</taxon>
        <taxon>Escherichia</taxon>
    </lineage>
</organism>
<accession>P0C058</accession>
<accession>P29210</accession>
<accession>P76733</accession>
<accession>Q2M7Z8</accession>
<proteinExistence type="evidence at protein level"/>
<reference key="1">
    <citation type="journal article" date="1992" name="J. Bacteriol.">
        <title>Two novel heat shock genes encoding proteins produced in response to heterologous protein expression in Escherichia coli.</title>
        <authorList>
            <person name="Allen S.P."/>
            <person name="Polazzi J.O."/>
            <person name="Gierse J."/>
            <person name="Easton A.M."/>
        </authorList>
    </citation>
    <scope>NUCLEOTIDE SEQUENCE [GENOMIC DNA]</scope>
    <scope>PARTIAL PROTEIN SEQUENCE</scope>
    <scope>INDUCTION</scope>
    <source>
        <strain>K12 / W3110 / ATCC 27325 / DSM 5911</strain>
    </source>
</reference>
<reference key="2">
    <citation type="journal article" date="1993" name="Genomics">
        <title>DNA sequence and analysis of 136 kilobases of the Escherichia coli genome: organizational symmetry around the origin of replication.</title>
        <authorList>
            <person name="Burland V.D."/>
            <person name="Plunkett G. III"/>
            <person name="Daniels D.L."/>
            <person name="Blattner F.R."/>
        </authorList>
    </citation>
    <scope>NUCLEOTIDE SEQUENCE [LARGE SCALE GENOMIC DNA]</scope>
    <source>
        <strain>K12 / MG1655 / ATCC 47076</strain>
    </source>
</reference>
<reference key="3">
    <citation type="journal article" date="1997" name="Science">
        <title>The complete genome sequence of Escherichia coli K-12.</title>
        <authorList>
            <person name="Blattner F.R."/>
            <person name="Plunkett G. III"/>
            <person name="Bloch C.A."/>
            <person name="Perna N.T."/>
            <person name="Burland V."/>
            <person name="Riley M."/>
            <person name="Collado-Vides J."/>
            <person name="Glasner J.D."/>
            <person name="Rode C.K."/>
            <person name="Mayhew G.F."/>
            <person name="Gregor J."/>
            <person name="Davis N.W."/>
            <person name="Kirkpatrick H.A."/>
            <person name="Goeden M.A."/>
            <person name="Rose D.J."/>
            <person name="Mau B."/>
            <person name="Shao Y."/>
        </authorList>
    </citation>
    <scope>NUCLEOTIDE SEQUENCE [LARGE SCALE GENOMIC DNA]</scope>
    <source>
        <strain>K12 / MG1655 / ATCC 47076</strain>
    </source>
</reference>
<reference key="4">
    <citation type="journal article" date="2006" name="Mol. Syst. Biol.">
        <title>Highly accurate genome sequences of Escherichia coli K-12 strains MG1655 and W3110.</title>
        <authorList>
            <person name="Hayashi K."/>
            <person name="Morooka N."/>
            <person name="Yamamoto Y."/>
            <person name="Fujita K."/>
            <person name="Isono K."/>
            <person name="Choi S."/>
            <person name="Ohtsubo E."/>
            <person name="Baba T."/>
            <person name="Wanner B.L."/>
            <person name="Mori H."/>
            <person name="Horiuchi T."/>
        </authorList>
    </citation>
    <scope>NUCLEOTIDE SEQUENCE [LARGE SCALE GENOMIC DNA]</scope>
    <source>
        <strain>K12 / W3110 / ATCC 27325 / DSM 5911</strain>
    </source>
</reference>
<reference key="5">
    <citation type="journal article" date="1997" name="Electrophoresis">
        <title>Escherichia coli proteome analysis using the gene-protein database.</title>
        <authorList>
            <person name="VanBogelen R.A."/>
            <person name="Abshire K.Z."/>
            <person name="Moldover B."/>
            <person name="Olson E.R."/>
            <person name="Neidhardt F.C."/>
        </authorList>
    </citation>
    <scope>IDENTIFICATION BY 2D-GEL</scope>
</reference>
<reference key="6">
    <citation type="journal article" date="1998" name="J. Biol. Chem.">
        <title>The small heat-shock protein IbpB from Escherichia coli stabilizes stress-denatured proteins for subsequent refolding by a multichaperone network.</title>
        <authorList>
            <person name="Veinger L."/>
            <person name="Diamant S."/>
            <person name="Buchner J."/>
            <person name="Goloubinoff P."/>
        </authorList>
    </citation>
    <scope>FUNCTION</scope>
</reference>
<reference key="7">
    <citation type="journal article" date="1999" name="J. Biol. Chem.">
        <title>Biochemical characterization of the small heat shock protein IbpB from Escherichia coli.</title>
        <authorList>
            <person name="Shearstone J.R."/>
            <person name="Baneyx F."/>
        </authorList>
    </citation>
    <scope>CHARACTERIZATION</scope>
    <scope>SUBUNIT</scope>
</reference>
<reference key="8">
    <citation type="journal article" date="2000" name="FEMS Microbiol. Lett.">
        <title>Small heat shock proteins, IbpA and IbpB, are involved in resistances to heat and superoxide stresses in Escherichia coli.</title>
        <authorList>
            <person name="Kitagawa M."/>
            <person name="Matsumura Y."/>
            <person name="Tsuchido T."/>
        </authorList>
    </citation>
    <scope>INVOLVEMENT IN RESISTANCE TO OXIDATIVE STRESS</scope>
</reference>
<reference key="9">
    <citation type="journal article" date="2002" name="Microbiology">
        <title>The Escherichia coli small heat-shock proteins IbpA and IbpB prevent the aggregation of endogenous proteins denatured in vivo during extreme heat shock.</title>
        <authorList>
            <person name="Kuczynska-Wisnik D."/>
            <person name="Kedzierska S."/>
            <person name="Matuszewska E."/>
            <person name="Lund P."/>
            <person name="Taylor A."/>
            <person name="Lipinska B."/>
            <person name="Laskowska E."/>
        </authorList>
    </citation>
    <scope>FUNCTION</scope>
</reference>
<reference key="10">
    <citation type="journal article" date="2002" name="Eur. J. Biochem.">
        <title>Escherichia coli small heat shock proteins, IbpA and IbpB, protect enzymes from inactivation by heat and oxidants.</title>
        <authorList>
            <person name="Kitagawa M."/>
            <person name="Miyakawa M."/>
            <person name="Matsumura Y."/>
            <person name="Tsuchido T."/>
        </authorList>
    </citation>
    <scope>FUNCTION</scope>
    <scope>SUBUNIT</scope>
</reference>
<reference key="11">
    <citation type="journal article" date="2003" name="Mol. Microbiol.">
        <title>Small heat shock proteins, ClpB and the DnaK system form a functional triade in reversing protein aggregation.</title>
        <authorList>
            <person name="Mogk A."/>
            <person name="Deuerling E."/>
            <person name="Vorderwuelbecke S."/>
            <person name="Vierling E."/>
            <person name="Bukau B."/>
        </authorList>
    </citation>
    <scope>INTERACTION WITH THE CLPB AND DNAK CHAPERONE SYSTEMS</scope>
</reference>
<reference key="12">
    <citation type="journal article" date="2004" name="Microbiology">
        <title>Aggregation of heat-shock-denatured, endogenous proteins and distribution of the IbpA/B and Fda marker-proteins in Escherichia coli WT and grpE280 cells.</title>
        <authorList>
            <person name="Laskowska E."/>
            <person name="Bohdanowicz J."/>
            <person name="Kuczynska-Wisnik D."/>
            <person name="Matuszewska E."/>
            <person name="Kedzierska S."/>
            <person name="Taylor A."/>
        </authorList>
    </citation>
    <scope>SUBCELLULAR LOCATION</scope>
</reference>
<reference key="13">
    <citation type="journal article" date="2005" name="J. Biol. Chem.">
        <title>The small heat shock protein IbpA of Escherichia coli cooperates with IbpB in stabilization of thermally aggregated proteins in a disaggregation competent state.</title>
        <authorList>
            <person name="Matuszewska M."/>
            <person name="Kuczynska-Wisnik D."/>
            <person name="Laskowska E."/>
            <person name="Liberek K."/>
        </authorList>
    </citation>
    <scope>INTERACTION WITH IBPBA</scope>
</reference>
<reference key="14">
    <citation type="journal article" date="2005" name="J. Mol. Biol.">
        <title>The essential role of the flexible termini in the temperature-responsiveness of the oligomeric state and chaperone-like activity for the polydisperse small heat shock protein IbpB from Escherichia coli.</title>
        <authorList>
            <person name="Jiao W."/>
            <person name="Qian M."/>
            <person name="Li P."/>
            <person name="Zhao L."/>
            <person name="Chang Z."/>
        </authorList>
    </citation>
    <scope>SUBUNIT</scope>
    <scope>DOMAIN</scope>
</reference>
<feature type="chain" id="PRO_0000126028" description="Small heat shock protein IbpB">
    <location>
        <begin position="1"/>
        <end position="142"/>
    </location>
</feature>
<feature type="domain" description="sHSP" evidence="1">
    <location>
        <begin position="26"/>
        <end position="137"/>
    </location>
</feature>
<keyword id="KW-0143">Chaperone</keyword>
<keyword id="KW-0963">Cytoplasm</keyword>
<keyword id="KW-0903">Direct protein sequencing</keyword>
<keyword id="KW-1185">Reference proteome</keyword>
<keyword id="KW-0346">Stress response</keyword>
<name>IBPB_ECOLI</name>
<sequence length="142" mass="16093">MRNFDLSPLMRQWIGFDKLANALQNAGESQSFPPYNIEKSDDNHYRITLALAGFRQEDLEIQLEGTRLSVKGTPEQPKEEKKWLHQGLMNQPFSLSFTLAENMEVSGATFVNGLLHIDLIRNEPEPIAAQRIAISERPALNS</sequence>
<gene>
    <name type="primary">ibpB</name>
    <name type="synonym">hslS</name>
    <name type="synonym">htpE</name>
    <name type="ordered locus">b3686</name>
    <name type="ordered locus">JW3663</name>
</gene>
<evidence type="ECO:0000255" key="1">
    <source>
        <dbReference type="PROSITE-ProRule" id="PRU00285"/>
    </source>
</evidence>
<evidence type="ECO:0000269" key="2">
    <source>
    </source>
</evidence>
<evidence type="ECO:0000269" key="3">
    <source>
    </source>
</evidence>
<evidence type="ECO:0000269" key="4">
    <source>
    </source>
</evidence>
<evidence type="ECO:0000269" key="5">
    <source>
    </source>
</evidence>
<evidence type="ECO:0000269" key="6">
    <source>
    </source>
</evidence>
<evidence type="ECO:0000269" key="7">
    <source>
    </source>
</evidence>
<evidence type="ECO:0000269" key="8">
    <source>
    </source>
</evidence>
<evidence type="ECO:0000305" key="9"/>
<comment type="function">
    <text evidence="3 4 8">Associates with aggregated proteins, together with IbpA, to stabilize and protect them from irreversible denaturation and extensive proteolysis during heat shock and oxidative stress. Aggregated proteins bound to the IbpAB complex are more efficiently refolded and reactivated by the ATP-dependent chaperone systems ClpB and DnaK/DnaJ/GrpE. Its activity is ATP-independent.</text>
</comment>
<comment type="biophysicochemical properties">
    <temperatureDependence>
        <text>Thermostable up to 50 degrees Celsius.</text>
    </temperatureDependence>
</comment>
<comment type="subunit">
    <text evidence="2 4 7">Homodimer. Forms homomultimers of about 100-150 subunits at optimal growth temperatures. Conformation changes to oligomers at high temperatures or high ionic concentrations. The decrease in size of the multimers is accompanied by an increase in chaperone activity.</text>
</comment>
<comment type="interaction">
    <interactant intactId="EBI-552784">
        <id>P0C058</id>
    </interactant>
    <interactant intactId="EBI-550729">
        <id>P0C054</id>
        <label>ibpA</label>
    </interactant>
    <organismsDiffer>false</organismsDiffer>
    <experiments>5</experiments>
</comment>
<comment type="interaction">
    <interactant intactId="EBI-552784">
        <id>P0C058</id>
    </interactant>
    <interactant intactId="EBI-552784">
        <id>P0C058</id>
        <label>ibpB</label>
    </interactant>
    <organismsDiffer>false</organismsDiffer>
    <experiments>3</experiments>
</comment>
<comment type="subcellular location">
    <subcellularLocation>
        <location evidence="6">Cytoplasm</location>
    </subcellularLocation>
</comment>
<comment type="induction">
    <text evidence="5">By heat shock.</text>
</comment>
<comment type="domain">
    <text evidence="7">The N- and C-terminal flexible termini are involved in oligomerization and in the binding of non-native substrate proteins, and are essential for chaperone activity.</text>
</comment>
<comment type="similarity">
    <text evidence="1 9">Belongs to the small heat shock protein (HSP20) family.</text>
</comment>
<comment type="sequence caution" evidence="9">
    <conflict type="erroneous initiation">
        <sequence resource="EMBL-CDS" id="AAA62038"/>
    </conflict>
    <text>Extended N-terminus.</text>
</comment>
<dbReference type="EMBL" id="M94104">
    <property type="protein sequence ID" value="AAA24425.1"/>
    <property type="molecule type" value="Genomic_DNA"/>
</dbReference>
<dbReference type="EMBL" id="L10328">
    <property type="protein sequence ID" value="AAA62038.1"/>
    <property type="status" value="ALT_INIT"/>
    <property type="molecule type" value="Genomic_DNA"/>
</dbReference>
<dbReference type="EMBL" id="U00096">
    <property type="protein sequence ID" value="AAC76709.2"/>
    <property type="molecule type" value="Genomic_DNA"/>
</dbReference>
<dbReference type="EMBL" id="AP009048">
    <property type="protein sequence ID" value="BAE77608.1"/>
    <property type="molecule type" value="Genomic_DNA"/>
</dbReference>
<dbReference type="RefSeq" id="NP_418141.2">
    <property type="nucleotide sequence ID" value="NC_000913.3"/>
</dbReference>
<dbReference type="RefSeq" id="WP_001243431.1">
    <property type="nucleotide sequence ID" value="NZ_STEB01000015.1"/>
</dbReference>
<dbReference type="SMR" id="P0C058"/>
<dbReference type="BioGRID" id="4260809">
    <property type="interactions" value="224"/>
</dbReference>
<dbReference type="BioGRID" id="852497">
    <property type="interactions" value="1"/>
</dbReference>
<dbReference type="DIP" id="DIP-48244N"/>
<dbReference type="FunCoup" id="P0C058">
    <property type="interactions" value="73"/>
</dbReference>
<dbReference type="IntAct" id="P0C058">
    <property type="interactions" value="11"/>
</dbReference>
<dbReference type="MINT" id="P0C058"/>
<dbReference type="STRING" id="511145.b3686"/>
<dbReference type="PaxDb" id="511145-b3686"/>
<dbReference type="EnsemblBacteria" id="AAC76709">
    <property type="protein sequence ID" value="AAC76709"/>
    <property type="gene ID" value="b3686"/>
</dbReference>
<dbReference type="GeneID" id="93778427"/>
<dbReference type="GeneID" id="948192"/>
<dbReference type="KEGG" id="ecj:JW3663"/>
<dbReference type="KEGG" id="eco:b3686"/>
<dbReference type="KEGG" id="ecoc:C3026_19985"/>
<dbReference type="PATRIC" id="fig|511145.12.peg.3808"/>
<dbReference type="EchoBASE" id="EB1497"/>
<dbReference type="eggNOG" id="COG0071">
    <property type="taxonomic scope" value="Bacteria"/>
</dbReference>
<dbReference type="HOGENOM" id="CLU_046737_4_2_6"/>
<dbReference type="InParanoid" id="P0C058"/>
<dbReference type="OMA" id="NIERCDR"/>
<dbReference type="OrthoDB" id="6871152at2"/>
<dbReference type="PhylomeDB" id="P0C058"/>
<dbReference type="BioCyc" id="EcoCyc:EG11535-MONOMER"/>
<dbReference type="PRO" id="PR:P0C058"/>
<dbReference type="Proteomes" id="UP000000625">
    <property type="component" value="Chromosome"/>
</dbReference>
<dbReference type="GO" id="GO:0005737">
    <property type="term" value="C:cytoplasm"/>
    <property type="evidence" value="ECO:0000314"/>
    <property type="project" value="EcoCyc"/>
</dbReference>
<dbReference type="GO" id="GO:0042802">
    <property type="term" value="F:identical protein binding"/>
    <property type="evidence" value="ECO:0000314"/>
    <property type="project" value="EcoCyc"/>
</dbReference>
<dbReference type="GO" id="GO:0050821">
    <property type="term" value="P:protein stabilization"/>
    <property type="evidence" value="ECO:0007669"/>
    <property type="project" value="UniProtKB-UniRule"/>
</dbReference>
<dbReference type="GO" id="GO:0009408">
    <property type="term" value="P:response to heat"/>
    <property type="evidence" value="ECO:0000315"/>
    <property type="project" value="EcoCyc"/>
</dbReference>
<dbReference type="GO" id="GO:1990169">
    <property type="term" value="P:stress response to copper ion"/>
    <property type="evidence" value="ECO:0000315"/>
    <property type="project" value="EcoCyc"/>
</dbReference>
<dbReference type="CDD" id="cd06470">
    <property type="entry name" value="ACD_IbpA-B_like"/>
    <property type="match status" value="1"/>
</dbReference>
<dbReference type="FunFam" id="2.60.40.790:FF:000005">
    <property type="entry name" value="Small heat shock protein IbpB"/>
    <property type="match status" value="1"/>
</dbReference>
<dbReference type="Gene3D" id="2.60.40.790">
    <property type="match status" value="1"/>
</dbReference>
<dbReference type="HAMAP" id="MF_02001">
    <property type="entry name" value="HSP20_IbpB"/>
    <property type="match status" value="1"/>
</dbReference>
<dbReference type="InterPro" id="IPR002068">
    <property type="entry name" value="A-crystallin/Hsp20_dom"/>
</dbReference>
<dbReference type="InterPro" id="IPR037913">
    <property type="entry name" value="ACD_IbpA/B"/>
</dbReference>
<dbReference type="InterPro" id="IPR008978">
    <property type="entry name" value="HSP20-like_chaperone"/>
</dbReference>
<dbReference type="InterPro" id="IPR022848">
    <property type="entry name" value="HSP20_IbpB"/>
</dbReference>
<dbReference type="NCBIfam" id="NF008618">
    <property type="entry name" value="PRK11597.1"/>
    <property type="match status" value="1"/>
</dbReference>
<dbReference type="PANTHER" id="PTHR47062">
    <property type="match status" value="1"/>
</dbReference>
<dbReference type="PANTHER" id="PTHR47062:SF2">
    <property type="entry name" value="SMALL HEAT SHOCK PROTEIN IBPB"/>
    <property type="match status" value="1"/>
</dbReference>
<dbReference type="Pfam" id="PF00011">
    <property type="entry name" value="HSP20"/>
    <property type="match status" value="1"/>
</dbReference>
<dbReference type="SUPFAM" id="SSF49764">
    <property type="entry name" value="HSP20-like chaperones"/>
    <property type="match status" value="1"/>
</dbReference>
<dbReference type="PROSITE" id="PS01031">
    <property type="entry name" value="SHSP"/>
    <property type="match status" value="1"/>
</dbReference>